<dbReference type="EC" id="1.3.1.98" evidence="1"/>
<dbReference type="EMBL" id="CP000697">
    <property type="protein sequence ID" value="ABQ29294.1"/>
    <property type="molecule type" value="Genomic_DNA"/>
</dbReference>
<dbReference type="RefSeq" id="WP_011941250.1">
    <property type="nucleotide sequence ID" value="NC_009484.1"/>
</dbReference>
<dbReference type="SMR" id="A5FUL2"/>
<dbReference type="STRING" id="349163.Acry_0065"/>
<dbReference type="KEGG" id="acr:Acry_0065"/>
<dbReference type="eggNOG" id="COG0812">
    <property type="taxonomic scope" value="Bacteria"/>
</dbReference>
<dbReference type="HOGENOM" id="CLU_035304_1_0_5"/>
<dbReference type="UniPathway" id="UPA00219"/>
<dbReference type="Proteomes" id="UP000000245">
    <property type="component" value="Chromosome"/>
</dbReference>
<dbReference type="GO" id="GO:0005829">
    <property type="term" value="C:cytosol"/>
    <property type="evidence" value="ECO:0007669"/>
    <property type="project" value="TreeGrafter"/>
</dbReference>
<dbReference type="GO" id="GO:0071949">
    <property type="term" value="F:FAD binding"/>
    <property type="evidence" value="ECO:0007669"/>
    <property type="project" value="InterPro"/>
</dbReference>
<dbReference type="GO" id="GO:0008762">
    <property type="term" value="F:UDP-N-acetylmuramate dehydrogenase activity"/>
    <property type="evidence" value="ECO:0007669"/>
    <property type="project" value="UniProtKB-UniRule"/>
</dbReference>
<dbReference type="GO" id="GO:0051301">
    <property type="term" value="P:cell division"/>
    <property type="evidence" value="ECO:0007669"/>
    <property type="project" value="UniProtKB-KW"/>
</dbReference>
<dbReference type="GO" id="GO:0071555">
    <property type="term" value="P:cell wall organization"/>
    <property type="evidence" value="ECO:0007669"/>
    <property type="project" value="UniProtKB-KW"/>
</dbReference>
<dbReference type="GO" id="GO:0009252">
    <property type="term" value="P:peptidoglycan biosynthetic process"/>
    <property type="evidence" value="ECO:0007669"/>
    <property type="project" value="UniProtKB-UniRule"/>
</dbReference>
<dbReference type="GO" id="GO:0008360">
    <property type="term" value="P:regulation of cell shape"/>
    <property type="evidence" value="ECO:0007669"/>
    <property type="project" value="UniProtKB-KW"/>
</dbReference>
<dbReference type="Gene3D" id="3.30.465.10">
    <property type="match status" value="1"/>
</dbReference>
<dbReference type="Gene3D" id="3.90.78.10">
    <property type="entry name" value="UDP-N-acetylenolpyruvoylglucosamine reductase, C-terminal domain"/>
    <property type="match status" value="1"/>
</dbReference>
<dbReference type="Gene3D" id="3.30.43.10">
    <property type="entry name" value="Uridine Diphospho-n-acetylenolpyruvylglucosamine Reductase, domain 2"/>
    <property type="match status" value="1"/>
</dbReference>
<dbReference type="HAMAP" id="MF_00037">
    <property type="entry name" value="MurB"/>
    <property type="match status" value="1"/>
</dbReference>
<dbReference type="InterPro" id="IPR016166">
    <property type="entry name" value="FAD-bd_PCMH"/>
</dbReference>
<dbReference type="InterPro" id="IPR036318">
    <property type="entry name" value="FAD-bd_PCMH-like_sf"/>
</dbReference>
<dbReference type="InterPro" id="IPR016167">
    <property type="entry name" value="FAD-bd_PCMH_sub1"/>
</dbReference>
<dbReference type="InterPro" id="IPR016169">
    <property type="entry name" value="FAD-bd_PCMH_sub2"/>
</dbReference>
<dbReference type="InterPro" id="IPR003170">
    <property type="entry name" value="MurB"/>
</dbReference>
<dbReference type="InterPro" id="IPR011601">
    <property type="entry name" value="MurB_C"/>
</dbReference>
<dbReference type="InterPro" id="IPR036635">
    <property type="entry name" value="MurB_C_sf"/>
</dbReference>
<dbReference type="InterPro" id="IPR006094">
    <property type="entry name" value="Oxid_FAD_bind_N"/>
</dbReference>
<dbReference type="NCBIfam" id="TIGR00179">
    <property type="entry name" value="murB"/>
    <property type="match status" value="1"/>
</dbReference>
<dbReference type="NCBIfam" id="NF010480">
    <property type="entry name" value="PRK13905.1"/>
    <property type="match status" value="1"/>
</dbReference>
<dbReference type="PANTHER" id="PTHR21071">
    <property type="entry name" value="UDP-N-ACETYLENOLPYRUVOYLGLUCOSAMINE REDUCTASE"/>
    <property type="match status" value="1"/>
</dbReference>
<dbReference type="PANTHER" id="PTHR21071:SF4">
    <property type="entry name" value="UDP-N-ACETYLENOLPYRUVOYLGLUCOSAMINE REDUCTASE"/>
    <property type="match status" value="1"/>
</dbReference>
<dbReference type="Pfam" id="PF01565">
    <property type="entry name" value="FAD_binding_4"/>
    <property type="match status" value="1"/>
</dbReference>
<dbReference type="Pfam" id="PF02873">
    <property type="entry name" value="MurB_C"/>
    <property type="match status" value="1"/>
</dbReference>
<dbReference type="SUPFAM" id="SSF56176">
    <property type="entry name" value="FAD-binding/transporter-associated domain-like"/>
    <property type="match status" value="1"/>
</dbReference>
<dbReference type="SUPFAM" id="SSF56194">
    <property type="entry name" value="Uridine diphospho-N-Acetylenolpyruvylglucosamine reductase, MurB, C-terminal domain"/>
    <property type="match status" value="1"/>
</dbReference>
<dbReference type="PROSITE" id="PS51387">
    <property type="entry name" value="FAD_PCMH"/>
    <property type="match status" value="1"/>
</dbReference>
<comment type="function">
    <text evidence="1">Cell wall formation.</text>
</comment>
<comment type="catalytic activity">
    <reaction evidence="1">
        <text>UDP-N-acetyl-alpha-D-muramate + NADP(+) = UDP-N-acetyl-3-O-(1-carboxyvinyl)-alpha-D-glucosamine + NADPH + H(+)</text>
        <dbReference type="Rhea" id="RHEA:12248"/>
        <dbReference type="ChEBI" id="CHEBI:15378"/>
        <dbReference type="ChEBI" id="CHEBI:57783"/>
        <dbReference type="ChEBI" id="CHEBI:58349"/>
        <dbReference type="ChEBI" id="CHEBI:68483"/>
        <dbReference type="ChEBI" id="CHEBI:70757"/>
        <dbReference type="EC" id="1.3.1.98"/>
    </reaction>
</comment>
<comment type="cofactor">
    <cofactor evidence="1">
        <name>FAD</name>
        <dbReference type="ChEBI" id="CHEBI:57692"/>
    </cofactor>
</comment>
<comment type="pathway">
    <text evidence="1">Cell wall biogenesis; peptidoglycan biosynthesis.</text>
</comment>
<comment type="subcellular location">
    <subcellularLocation>
        <location evidence="1">Cytoplasm</location>
    </subcellularLocation>
</comment>
<comment type="similarity">
    <text evidence="1">Belongs to the MurB family.</text>
</comment>
<organism>
    <name type="scientific">Acidiphilium cryptum (strain JF-5)</name>
    <dbReference type="NCBI Taxonomy" id="349163"/>
    <lineage>
        <taxon>Bacteria</taxon>
        <taxon>Pseudomonadati</taxon>
        <taxon>Pseudomonadota</taxon>
        <taxon>Alphaproteobacteria</taxon>
        <taxon>Acetobacterales</taxon>
        <taxon>Acidocellaceae</taxon>
        <taxon>Acidiphilium</taxon>
    </lineage>
</organism>
<feature type="chain" id="PRO_1000002859" description="UDP-N-acetylenolpyruvoylglucosamine reductase">
    <location>
        <begin position="1"/>
        <end position="309"/>
    </location>
</feature>
<feature type="domain" description="FAD-binding PCMH-type" evidence="1">
    <location>
        <begin position="34"/>
        <end position="198"/>
    </location>
</feature>
<feature type="active site" evidence="1">
    <location>
        <position position="178"/>
    </location>
</feature>
<feature type="active site" description="Proton donor" evidence="1">
    <location>
        <position position="227"/>
    </location>
</feature>
<feature type="active site" evidence="1">
    <location>
        <position position="297"/>
    </location>
</feature>
<gene>
    <name evidence="1" type="primary">murB</name>
    <name type="ordered locus">Acry_0065</name>
</gene>
<reference key="1">
    <citation type="submission" date="2007-05" db="EMBL/GenBank/DDBJ databases">
        <title>Complete sequence of chromosome of Acidiphilium cryptum JF-5.</title>
        <authorList>
            <consortium name="US DOE Joint Genome Institute"/>
            <person name="Copeland A."/>
            <person name="Lucas S."/>
            <person name="Lapidus A."/>
            <person name="Barry K."/>
            <person name="Detter J.C."/>
            <person name="Glavina del Rio T."/>
            <person name="Hammon N."/>
            <person name="Israni S."/>
            <person name="Dalin E."/>
            <person name="Tice H."/>
            <person name="Pitluck S."/>
            <person name="Sims D."/>
            <person name="Brettin T."/>
            <person name="Bruce D."/>
            <person name="Han C."/>
            <person name="Schmutz J."/>
            <person name="Larimer F."/>
            <person name="Land M."/>
            <person name="Hauser L."/>
            <person name="Kyrpides N."/>
            <person name="Kim E."/>
            <person name="Magnuson T."/>
            <person name="Richardson P."/>
        </authorList>
    </citation>
    <scope>NUCLEOTIDE SEQUENCE [LARGE SCALE GENOMIC DNA]</scope>
    <source>
        <strain>JF-5</strain>
    </source>
</reference>
<proteinExistence type="inferred from homology"/>
<evidence type="ECO:0000255" key="1">
    <source>
        <dbReference type="HAMAP-Rule" id="MF_00037"/>
    </source>
</evidence>
<sequence>MMAAPVMADWRAALPEVRGRIGFDVPLGPVTWFRVGGPAEVMFRPADIEDLSRFLAALAPEVPVLPIGAASNLIVRDGGIAGVVVRLVRGFADIEVQPDGIVAGAAALDATIAEHAAAAGLTGLEFLSGIPGSLGGAVAMNAGAYGAEIRDVLDWAEIVGRDGTVARYAAGDLALTYRHARLPEGGIVVRARLHARPGEAAAIAARMADIRASREATQPVRARTGGSTFRNPEGDKAWRLIDEAGCRGLIHGGAQVSEKHCNFLINLGEATAADIEGLGETVRRRVRERTGVELIWEIRRVGLPCRGAA</sequence>
<name>MURB_ACICJ</name>
<accession>A5FUL2</accession>
<keyword id="KW-0131">Cell cycle</keyword>
<keyword id="KW-0132">Cell division</keyword>
<keyword id="KW-0133">Cell shape</keyword>
<keyword id="KW-0961">Cell wall biogenesis/degradation</keyword>
<keyword id="KW-0963">Cytoplasm</keyword>
<keyword id="KW-0274">FAD</keyword>
<keyword id="KW-0285">Flavoprotein</keyword>
<keyword id="KW-0521">NADP</keyword>
<keyword id="KW-0560">Oxidoreductase</keyword>
<keyword id="KW-0573">Peptidoglycan synthesis</keyword>
<keyword id="KW-1185">Reference proteome</keyword>
<protein>
    <recommendedName>
        <fullName evidence="1">UDP-N-acetylenolpyruvoylglucosamine reductase</fullName>
        <ecNumber evidence="1">1.3.1.98</ecNumber>
    </recommendedName>
    <alternativeName>
        <fullName evidence="1">UDP-N-acetylmuramate dehydrogenase</fullName>
    </alternativeName>
</protein>